<evidence type="ECO:0000255" key="1">
    <source>
        <dbReference type="HAMAP-Rule" id="MF_01220"/>
    </source>
</evidence>
<evidence type="ECO:0000256" key="2">
    <source>
        <dbReference type="SAM" id="MobiDB-lite"/>
    </source>
</evidence>
<sequence>MRVVVSIGGSVLAPDLDPDRVAAYAEAIERLAADGCEVGVVVGGGGVAREYIETARELGANEVELDQLGIGTTRLNARLLIAALAGGANLSPATGYDEAAAALRRGEVSVMGGVTPGQTTDAVAAAFAESVDADLLVYATSANGVYDADPNVDDDATQFGSMSPAELVDIVLPMSRNAGASAPVDLLAAKLIDRAGIRSIVLDGTNPEVVVDAVLRGDHTGTDVIPTGSEEPIYWTGSSDA</sequence>
<name>PYRH_HALLT</name>
<reference key="1">
    <citation type="journal article" date="2016" name="Stand. Genomic Sci.">
        <title>Complete genome sequence of the Antarctic Halorubrum lacusprofundi type strain ACAM 34.</title>
        <authorList>
            <person name="Anderson I.J."/>
            <person name="DasSarma P."/>
            <person name="Lucas S."/>
            <person name="Copeland A."/>
            <person name="Lapidus A."/>
            <person name="Del Rio T.G."/>
            <person name="Tice H."/>
            <person name="Dalin E."/>
            <person name="Bruce D.C."/>
            <person name="Goodwin L."/>
            <person name="Pitluck S."/>
            <person name="Sims D."/>
            <person name="Brettin T.S."/>
            <person name="Detter J.C."/>
            <person name="Han C.S."/>
            <person name="Larimer F."/>
            <person name="Hauser L."/>
            <person name="Land M."/>
            <person name="Ivanova N."/>
            <person name="Richardson P."/>
            <person name="Cavicchioli R."/>
            <person name="DasSarma S."/>
            <person name="Woese C.R."/>
            <person name="Kyrpides N.C."/>
        </authorList>
    </citation>
    <scope>NUCLEOTIDE SEQUENCE [LARGE SCALE GENOMIC DNA]</scope>
    <source>
        <strain>ATCC 49239 / DSM 5036 / JCM 8891 / ACAM 34</strain>
    </source>
</reference>
<dbReference type="EC" id="2.7.4.22" evidence="1"/>
<dbReference type="EMBL" id="CP001365">
    <property type="protein sequence ID" value="ACM57961.1"/>
    <property type="molecule type" value="Genomic_DNA"/>
</dbReference>
<dbReference type="RefSeq" id="WP_015911081.1">
    <property type="nucleotide sequence ID" value="NC_012029.1"/>
</dbReference>
<dbReference type="SMR" id="B9LSL4"/>
<dbReference type="GeneID" id="7400504"/>
<dbReference type="KEGG" id="hla:Hlac_2386"/>
<dbReference type="eggNOG" id="arCOG00858">
    <property type="taxonomic scope" value="Archaea"/>
</dbReference>
<dbReference type="HOGENOM" id="CLU_079546_0_0_2"/>
<dbReference type="UniPathway" id="UPA00159">
    <property type="reaction ID" value="UER00275"/>
</dbReference>
<dbReference type="Proteomes" id="UP000000740">
    <property type="component" value="Chromosome 1"/>
</dbReference>
<dbReference type="GO" id="GO:0005737">
    <property type="term" value="C:cytoplasm"/>
    <property type="evidence" value="ECO:0007669"/>
    <property type="project" value="UniProtKB-SubCell"/>
</dbReference>
<dbReference type="GO" id="GO:0005524">
    <property type="term" value="F:ATP binding"/>
    <property type="evidence" value="ECO:0007669"/>
    <property type="project" value="UniProtKB-KW"/>
</dbReference>
<dbReference type="GO" id="GO:0033862">
    <property type="term" value="F:UMP kinase activity"/>
    <property type="evidence" value="ECO:0007669"/>
    <property type="project" value="UniProtKB-EC"/>
</dbReference>
<dbReference type="GO" id="GO:0044210">
    <property type="term" value="P:'de novo' CTP biosynthetic process"/>
    <property type="evidence" value="ECO:0007669"/>
    <property type="project" value="UniProtKB-UniRule"/>
</dbReference>
<dbReference type="GO" id="GO:0006225">
    <property type="term" value="P:UDP biosynthetic process"/>
    <property type="evidence" value="ECO:0007669"/>
    <property type="project" value="TreeGrafter"/>
</dbReference>
<dbReference type="Gene3D" id="3.40.1160.10">
    <property type="entry name" value="Acetylglutamate kinase-like"/>
    <property type="match status" value="1"/>
</dbReference>
<dbReference type="HAMAP" id="MF_01220_A">
    <property type="entry name" value="PyrH_A"/>
    <property type="match status" value="1"/>
</dbReference>
<dbReference type="InterPro" id="IPR036393">
    <property type="entry name" value="AceGlu_kinase-like_sf"/>
</dbReference>
<dbReference type="InterPro" id="IPR001048">
    <property type="entry name" value="Asp/Glu/Uridylate_kinase"/>
</dbReference>
<dbReference type="InterPro" id="IPR011817">
    <property type="entry name" value="Uridylate_kinase"/>
</dbReference>
<dbReference type="InterPro" id="IPR011818">
    <property type="entry name" value="Uridylate_kinase_arch/spir"/>
</dbReference>
<dbReference type="NCBIfam" id="TIGR02076">
    <property type="entry name" value="pyrH_arch"/>
    <property type="match status" value="1"/>
</dbReference>
<dbReference type="PANTHER" id="PTHR42833">
    <property type="entry name" value="URIDYLATE KINASE"/>
    <property type="match status" value="1"/>
</dbReference>
<dbReference type="PANTHER" id="PTHR42833:SF4">
    <property type="entry name" value="URIDYLATE KINASE PUMPKIN, CHLOROPLASTIC"/>
    <property type="match status" value="1"/>
</dbReference>
<dbReference type="Pfam" id="PF00696">
    <property type="entry name" value="AA_kinase"/>
    <property type="match status" value="1"/>
</dbReference>
<dbReference type="PIRSF" id="PIRSF005650">
    <property type="entry name" value="Uridylate_kin"/>
    <property type="match status" value="1"/>
</dbReference>
<dbReference type="SUPFAM" id="SSF53633">
    <property type="entry name" value="Carbamate kinase-like"/>
    <property type="match status" value="1"/>
</dbReference>
<protein>
    <recommendedName>
        <fullName evidence="1">Uridylate kinase</fullName>
        <shortName evidence="1">UK</shortName>
        <ecNumber evidence="1">2.7.4.22</ecNumber>
    </recommendedName>
    <alternativeName>
        <fullName evidence="1">Uridine monophosphate kinase</fullName>
        <shortName evidence="1">UMP kinase</shortName>
        <shortName evidence="1">UMPK</shortName>
    </alternativeName>
</protein>
<accession>B9LSL4</accession>
<keyword id="KW-0067">ATP-binding</keyword>
<keyword id="KW-0963">Cytoplasm</keyword>
<keyword id="KW-0418">Kinase</keyword>
<keyword id="KW-0547">Nucleotide-binding</keyword>
<keyword id="KW-0665">Pyrimidine biosynthesis</keyword>
<keyword id="KW-1185">Reference proteome</keyword>
<keyword id="KW-0808">Transferase</keyword>
<comment type="function">
    <text evidence="1">Catalyzes the reversible phosphorylation of UMP to UDP.</text>
</comment>
<comment type="catalytic activity">
    <reaction evidence="1">
        <text>UMP + ATP = UDP + ADP</text>
        <dbReference type="Rhea" id="RHEA:24400"/>
        <dbReference type="ChEBI" id="CHEBI:30616"/>
        <dbReference type="ChEBI" id="CHEBI:57865"/>
        <dbReference type="ChEBI" id="CHEBI:58223"/>
        <dbReference type="ChEBI" id="CHEBI:456216"/>
        <dbReference type="EC" id="2.7.4.22"/>
    </reaction>
</comment>
<comment type="activity regulation">
    <text evidence="1">Inhibited by UTP.</text>
</comment>
<comment type="pathway">
    <text evidence="1">Pyrimidine metabolism; CTP biosynthesis via de novo pathway; UDP from UMP (UMPK route): step 1/1.</text>
</comment>
<comment type="subunit">
    <text evidence="1">Homohexamer.</text>
</comment>
<comment type="subcellular location">
    <subcellularLocation>
        <location evidence="1">Cytoplasm</location>
    </subcellularLocation>
</comment>
<comment type="similarity">
    <text evidence="1">Belongs to the UMP kinase family.</text>
</comment>
<organism>
    <name type="scientific">Halorubrum lacusprofundi (strain ATCC 49239 / DSM 5036 / JCM 8891 / ACAM 34)</name>
    <dbReference type="NCBI Taxonomy" id="416348"/>
    <lineage>
        <taxon>Archaea</taxon>
        <taxon>Methanobacteriati</taxon>
        <taxon>Methanobacteriota</taxon>
        <taxon>Stenosarchaea group</taxon>
        <taxon>Halobacteria</taxon>
        <taxon>Halobacteriales</taxon>
        <taxon>Haloferacaceae</taxon>
        <taxon>Halorubrum</taxon>
    </lineage>
</organism>
<feature type="chain" id="PRO_1000164860" description="Uridylate kinase">
    <location>
        <begin position="1"/>
        <end position="241"/>
    </location>
</feature>
<feature type="region of interest" description="Disordered" evidence="2">
    <location>
        <begin position="222"/>
        <end position="241"/>
    </location>
</feature>
<feature type="binding site" evidence="1">
    <location>
        <begin position="9"/>
        <end position="10"/>
    </location>
    <ligand>
        <name>ATP</name>
        <dbReference type="ChEBI" id="CHEBI:30616"/>
    </ligand>
</feature>
<feature type="binding site" evidence="1">
    <location>
        <position position="44"/>
    </location>
    <ligand>
        <name>UMP</name>
        <dbReference type="ChEBI" id="CHEBI:57865"/>
    </ligand>
</feature>
<feature type="binding site" evidence="1">
    <location>
        <position position="45"/>
    </location>
    <ligand>
        <name>ATP</name>
        <dbReference type="ChEBI" id="CHEBI:30616"/>
    </ligand>
</feature>
<feature type="binding site" evidence="1">
    <location>
        <position position="49"/>
    </location>
    <ligand>
        <name>ATP</name>
        <dbReference type="ChEBI" id="CHEBI:30616"/>
    </ligand>
</feature>
<feature type="binding site" evidence="1">
    <location>
        <position position="66"/>
    </location>
    <ligand>
        <name>UMP</name>
        <dbReference type="ChEBI" id="CHEBI:57865"/>
    </ligand>
</feature>
<feature type="binding site" evidence="1">
    <location>
        <begin position="114"/>
        <end position="120"/>
    </location>
    <ligand>
        <name>UMP</name>
        <dbReference type="ChEBI" id="CHEBI:57865"/>
    </ligand>
</feature>
<feature type="binding site" evidence="1">
    <location>
        <position position="140"/>
    </location>
    <ligand>
        <name>ATP</name>
        <dbReference type="ChEBI" id="CHEBI:30616"/>
    </ligand>
</feature>
<feature type="binding site" evidence="1">
    <location>
        <position position="146"/>
    </location>
    <ligand>
        <name>ATP</name>
        <dbReference type="ChEBI" id="CHEBI:30616"/>
    </ligand>
</feature>
<feature type="binding site" evidence="1">
    <location>
        <position position="149"/>
    </location>
    <ligand>
        <name>ATP</name>
        <dbReference type="ChEBI" id="CHEBI:30616"/>
    </ligand>
</feature>
<gene>
    <name evidence="1" type="primary">pyrH</name>
    <name type="ordered locus">Hlac_2386</name>
</gene>
<proteinExistence type="inferred from homology"/>